<comment type="function">
    <text evidence="2">One of the essential components for the initiation of protein synthesis. Protects formylmethionyl-tRNA from spontaneous hydrolysis and promotes its binding to the 30S ribosomal subunits. Also involved in the hydrolysis of GTP during the formation of the 70S ribosomal complex.</text>
</comment>
<comment type="subcellular location">
    <subcellularLocation>
        <location evidence="2">Cytoplasm</location>
    </subcellularLocation>
</comment>
<comment type="similarity">
    <text evidence="2">Belongs to the TRAFAC class translation factor GTPase superfamily. Classic translation factor GTPase family. IF-2 subfamily.</text>
</comment>
<reference key="1">
    <citation type="journal article" date="2009" name="PLoS Genet.">
        <title>Alliance of proteomics and genomics to unravel the specificities of Sahara bacterium Deinococcus deserti.</title>
        <authorList>
            <person name="de Groot A."/>
            <person name="Dulermo R."/>
            <person name="Ortet P."/>
            <person name="Blanchard L."/>
            <person name="Guerin P."/>
            <person name="Fernandez B."/>
            <person name="Vacherie B."/>
            <person name="Dossat C."/>
            <person name="Jolivet E."/>
            <person name="Siguier P."/>
            <person name="Chandler M."/>
            <person name="Barakat M."/>
            <person name="Dedieu A."/>
            <person name="Barbe V."/>
            <person name="Heulin T."/>
            <person name="Sommer S."/>
            <person name="Achouak W."/>
            <person name="Armengaud J."/>
        </authorList>
    </citation>
    <scope>NUCLEOTIDE SEQUENCE [LARGE SCALE GENOMIC DNA]</scope>
    <source>
        <strain>DSM 17065 / CIP 109153 / LMG 22923 / VCD115</strain>
    </source>
</reference>
<proteinExistence type="inferred from homology"/>
<gene>
    <name evidence="2" type="primary">infB</name>
    <name type="ordered locus">Deide_10370</name>
</gene>
<evidence type="ECO:0000250" key="1"/>
<evidence type="ECO:0000255" key="2">
    <source>
        <dbReference type="HAMAP-Rule" id="MF_00100"/>
    </source>
</evidence>
<evidence type="ECO:0000256" key="3">
    <source>
        <dbReference type="SAM" id="MobiDB-lite"/>
    </source>
</evidence>
<protein>
    <recommendedName>
        <fullName evidence="2">Translation initiation factor IF-2</fullName>
    </recommendedName>
</protein>
<keyword id="KW-0963">Cytoplasm</keyword>
<keyword id="KW-0342">GTP-binding</keyword>
<keyword id="KW-0396">Initiation factor</keyword>
<keyword id="KW-0547">Nucleotide-binding</keyword>
<keyword id="KW-0648">Protein biosynthesis</keyword>
<keyword id="KW-1185">Reference proteome</keyword>
<accession>C1CUQ9</accession>
<feature type="chain" id="PRO_1000202768" description="Translation initiation factor IF-2">
    <location>
        <begin position="1"/>
        <end position="607"/>
    </location>
</feature>
<feature type="domain" description="tr-type G">
    <location>
        <begin position="108"/>
        <end position="281"/>
    </location>
</feature>
<feature type="region of interest" description="Disordered" evidence="3">
    <location>
        <begin position="54"/>
        <end position="93"/>
    </location>
</feature>
<feature type="region of interest" description="G1" evidence="1">
    <location>
        <begin position="117"/>
        <end position="124"/>
    </location>
</feature>
<feature type="region of interest" description="G2" evidence="1">
    <location>
        <begin position="142"/>
        <end position="146"/>
    </location>
</feature>
<feature type="region of interest" description="G3" evidence="1">
    <location>
        <begin position="163"/>
        <end position="166"/>
    </location>
</feature>
<feature type="region of interest" description="G4" evidence="1">
    <location>
        <begin position="217"/>
        <end position="220"/>
    </location>
</feature>
<feature type="region of interest" description="G5" evidence="1">
    <location>
        <begin position="253"/>
        <end position="255"/>
    </location>
</feature>
<feature type="compositionally biased region" description="Low complexity" evidence="3">
    <location>
        <begin position="62"/>
        <end position="93"/>
    </location>
</feature>
<feature type="binding site" evidence="2">
    <location>
        <begin position="117"/>
        <end position="124"/>
    </location>
    <ligand>
        <name>GTP</name>
        <dbReference type="ChEBI" id="CHEBI:37565"/>
    </ligand>
</feature>
<feature type="binding site" evidence="2">
    <location>
        <begin position="163"/>
        <end position="167"/>
    </location>
    <ligand>
        <name>GTP</name>
        <dbReference type="ChEBI" id="CHEBI:37565"/>
    </ligand>
</feature>
<feature type="binding site" evidence="2">
    <location>
        <begin position="217"/>
        <end position="220"/>
    </location>
    <ligand>
        <name>GTP</name>
        <dbReference type="ChEBI" id="CHEBI:37565"/>
    </ligand>
</feature>
<name>IF2_DEIDV</name>
<organism>
    <name type="scientific">Deinococcus deserti (strain DSM 17065 / CIP 109153 / LMG 22923 / VCD115)</name>
    <dbReference type="NCBI Taxonomy" id="546414"/>
    <lineage>
        <taxon>Bacteria</taxon>
        <taxon>Thermotogati</taxon>
        <taxon>Deinococcota</taxon>
        <taxon>Deinococci</taxon>
        <taxon>Deinococcales</taxon>
        <taxon>Deinococcaceae</taxon>
        <taxon>Deinococcus</taxon>
    </lineage>
</organism>
<sequence length="607" mass="65074">MSKVRIYTLAKDLGVENARMLEILDGLGVAYKSVSSTIEEETVDLIKQILEEESAPQAQDSTPVAETPAAAQPAAPQAASSQPAAAQAAQAVAEPVAAPEPAVNEIPHRAPVVTIMGHVDHGKTSLLDYIRKTRVAAKEAGGITQHVGAFEAKTSKGKIVFIDTPGHEAFTTIRARGANVADIAIIVIAADDSLMPQTREAIAHAQAAKVPMIVAINKVDLPQADPERVKTDLTQLNLVPEEYGGDLIVVPVSAKTGEGVEDLLEYISLTAELEDLRADPKGPFSGVIIEGKVDRQAGVLATVMVQEGTLHVGDFLVVGENYGKIKAMTDSAGGRIKEAGPSTPVQVLGFSEVPASGEKVQSAKNEHAARDVIAARADVRRDQENARDRRKTQRTLEDIMGPIGEVRTVNLVLRADTQGSVEALQGILARKEGEDVKINVMLAGIGAPTEGDVLLASTAEATILCFSVTPSGSVTKMAENKGVDIKSYRIIYELIDEVDRLIKGNVEPVFEERYLGRAEVRMVIRHPKSGNIAGSYVTDGMFRRNAKAKVTRGKQTVYEGTIVGLKRFKDDVREVQTGYECGINLDWNDVMEGDIIEASEMVEVEQA</sequence>
<dbReference type="EMBL" id="CP001114">
    <property type="protein sequence ID" value="ACO45926.1"/>
    <property type="molecule type" value="Genomic_DNA"/>
</dbReference>
<dbReference type="RefSeq" id="WP_012693049.1">
    <property type="nucleotide sequence ID" value="NC_012526.1"/>
</dbReference>
<dbReference type="SMR" id="C1CUQ9"/>
<dbReference type="STRING" id="546414.Deide_10370"/>
<dbReference type="PaxDb" id="546414-Deide_10370"/>
<dbReference type="KEGG" id="ddr:Deide_10370"/>
<dbReference type="eggNOG" id="COG0532">
    <property type="taxonomic scope" value="Bacteria"/>
</dbReference>
<dbReference type="HOGENOM" id="CLU_006301_5_2_0"/>
<dbReference type="OrthoDB" id="9811804at2"/>
<dbReference type="Proteomes" id="UP000002208">
    <property type="component" value="Chromosome"/>
</dbReference>
<dbReference type="GO" id="GO:0005829">
    <property type="term" value="C:cytosol"/>
    <property type="evidence" value="ECO:0007669"/>
    <property type="project" value="TreeGrafter"/>
</dbReference>
<dbReference type="GO" id="GO:0005525">
    <property type="term" value="F:GTP binding"/>
    <property type="evidence" value="ECO:0007669"/>
    <property type="project" value="UniProtKB-KW"/>
</dbReference>
<dbReference type="GO" id="GO:0003924">
    <property type="term" value="F:GTPase activity"/>
    <property type="evidence" value="ECO:0007669"/>
    <property type="project" value="UniProtKB-UniRule"/>
</dbReference>
<dbReference type="GO" id="GO:0003743">
    <property type="term" value="F:translation initiation factor activity"/>
    <property type="evidence" value="ECO:0007669"/>
    <property type="project" value="UniProtKB-UniRule"/>
</dbReference>
<dbReference type="CDD" id="cd01887">
    <property type="entry name" value="IF2_eIF5B"/>
    <property type="match status" value="1"/>
</dbReference>
<dbReference type="CDD" id="cd03702">
    <property type="entry name" value="IF2_mtIF2_II"/>
    <property type="match status" value="1"/>
</dbReference>
<dbReference type="CDD" id="cd03692">
    <property type="entry name" value="mtIF2_IVc"/>
    <property type="match status" value="1"/>
</dbReference>
<dbReference type="FunFam" id="2.40.30.10:FF:000007">
    <property type="entry name" value="Translation initiation factor IF-2"/>
    <property type="match status" value="1"/>
</dbReference>
<dbReference type="FunFam" id="2.40.30.10:FF:000008">
    <property type="entry name" value="Translation initiation factor IF-2"/>
    <property type="match status" value="1"/>
</dbReference>
<dbReference type="FunFam" id="3.40.50.10050:FF:000001">
    <property type="entry name" value="Translation initiation factor IF-2"/>
    <property type="match status" value="1"/>
</dbReference>
<dbReference type="FunFam" id="3.40.50.300:FF:000019">
    <property type="entry name" value="Translation initiation factor IF-2"/>
    <property type="match status" value="1"/>
</dbReference>
<dbReference type="Gene3D" id="1.10.10.2480">
    <property type="match status" value="1"/>
</dbReference>
<dbReference type="Gene3D" id="3.40.50.300">
    <property type="entry name" value="P-loop containing nucleotide triphosphate hydrolases"/>
    <property type="match status" value="1"/>
</dbReference>
<dbReference type="Gene3D" id="2.40.30.10">
    <property type="entry name" value="Translation factors"/>
    <property type="match status" value="2"/>
</dbReference>
<dbReference type="Gene3D" id="3.40.50.10050">
    <property type="entry name" value="Translation initiation factor IF- 2, domain 3"/>
    <property type="match status" value="1"/>
</dbReference>
<dbReference type="HAMAP" id="MF_00100_B">
    <property type="entry name" value="IF_2_B"/>
    <property type="match status" value="1"/>
</dbReference>
<dbReference type="InterPro" id="IPR053905">
    <property type="entry name" value="EF-G-like_DII"/>
</dbReference>
<dbReference type="InterPro" id="IPR044145">
    <property type="entry name" value="IF2_II"/>
</dbReference>
<dbReference type="InterPro" id="IPR006847">
    <property type="entry name" value="IF2_N"/>
</dbReference>
<dbReference type="InterPro" id="IPR027417">
    <property type="entry name" value="P-loop_NTPase"/>
</dbReference>
<dbReference type="InterPro" id="IPR005225">
    <property type="entry name" value="Small_GTP-bd"/>
</dbReference>
<dbReference type="InterPro" id="IPR000795">
    <property type="entry name" value="T_Tr_GTP-bd_dom"/>
</dbReference>
<dbReference type="InterPro" id="IPR000178">
    <property type="entry name" value="TF_IF2_bacterial-like"/>
</dbReference>
<dbReference type="InterPro" id="IPR015760">
    <property type="entry name" value="TIF_IF2"/>
</dbReference>
<dbReference type="InterPro" id="IPR023115">
    <property type="entry name" value="TIF_IF2_dom3"/>
</dbReference>
<dbReference type="InterPro" id="IPR036925">
    <property type="entry name" value="TIF_IF2_dom3_sf"/>
</dbReference>
<dbReference type="InterPro" id="IPR009000">
    <property type="entry name" value="Transl_B-barrel_sf"/>
</dbReference>
<dbReference type="NCBIfam" id="TIGR00487">
    <property type="entry name" value="IF-2"/>
    <property type="match status" value="1"/>
</dbReference>
<dbReference type="NCBIfam" id="TIGR00231">
    <property type="entry name" value="small_GTP"/>
    <property type="match status" value="1"/>
</dbReference>
<dbReference type="PANTHER" id="PTHR43381:SF5">
    <property type="entry name" value="TR-TYPE G DOMAIN-CONTAINING PROTEIN"/>
    <property type="match status" value="1"/>
</dbReference>
<dbReference type="PANTHER" id="PTHR43381">
    <property type="entry name" value="TRANSLATION INITIATION FACTOR IF-2-RELATED"/>
    <property type="match status" value="1"/>
</dbReference>
<dbReference type="Pfam" id="PF22042">
    <property type="entry name" value="EF-G_D2"/>
    <property type="match status" value="1"/>
</dbReference>
<dbReference type="Pfam" id="PF00009">
    <property type="entry name" value="GTP_EFTU"/>
    <property type="match status" value="1"/>
</dbReference>
<dbReference type="Pfam" id="PF11987">
    <property type="entry name" value="IF-2"/>
    <property type="match status" value="1"/>
</dbReference>
<dbReference type="Pfam" id="PF04760">
    <property type="entry name" value="IF2_N"/>
    <property type="match status" value="1"/>
</dbReference>
<dbReference type="SUPFAM" id="SSF52156">
    <property type="entry name" value="Initiation factor IF2/eIF5b, domain 3"/>
    <property type="match status" value="1"/>
</dbReference>
<dbReference type="SUPFAM" id="SSF52540">
    <property type="entry name" value="P-loop containing nucleoside triphosphate hydrolases"/>
    <property type="match status" value="1"/>
</dbReference>
<dbReference type="SUPFAM" id="SSF50447">
    <property type="entry name" value="Translation proteins"/>
    <property type="match status" value="2"/>
</dbReference>
<dbReference type="PROSITE" id="PS51722">
    <property type="entry name" value="G_TR_2"/>
    <property type="match status" value="1"/>
</dbReference>
<dbReference type="PROSITE" id="PS01176">
    <property type="entry name" value="IF2"/>
    <property type="match status" value="1"/>
</dbReference>